<dbReference type="EMBL" id="AY034186">
    <property type="protein sequence ID" value="AAK61557.1"/>
    <property type="molecule type" value="Genomic_DNA"/>
</dbReference>
<dbReference type="GO" id="GO:0009507">
    <property type="term" value="C:chloroplast"/>
    <property type="evidence" value="ECO:0007669"/>
    <property type="project" value="UniProtKB-SubCell"/>
</dbReference>
<dbReference type="GO" id="GO:0003723">
    <property type="term" value="F:RNA binding"/>
    <property type="evidence" value="ECO:0007669"/>
    <property type="project" value="UniProtKB-KW"/>
</dbReference>
<dbReference type="GO" id="GO:0006397">
    <property type="term" value="P:mRNA processing"/>
    <property type="evidence" value="ECO:0007669"/>
    <property type="project" value="UniProtKB-KW"/>
</dbReference>
<dbReference type="GO" id="GO:0008380">
    <property type="term" value="P:RNA splicing"/>
    <property type="evidence" value="ECO:0007669"/>
    <property type="project" value="UniProtKB-UniRule"/>
</dbReference>
<dbReference type="GO" id="GO:0008033">
    <property type="term" value="P:tRNA processing"/>
    <property type="evidence" value="ECO:0007669"/>
    <property type="project" value="UniProtKB-KW"/>
</dbReference>
<dbReference type="HAMAP" id="MF_01390">
    <property type="entry name" value="MatK"/>
    <property type="match status" value="1"/>
</dbReference>
<dbReference type="InterPro" id="IPR024937">
    <property type="entry name" value="Domain_X"/>
</dbReference>
<dbReference type="InterPro" id="IPR002866">
    <property type="entry name" value="Maturase_MatK"/>
</dbReference>
<dbReference type="InterPro" id="IPR024942">
    <property type="entry name" value="Maturase_MatK_N"/>
</dbReference>
<dbReference type="PANTHER" id="PTHR34811">
    <property type="entry name" value="MATURASE K"/>
    <property type="match status" value="1"/>
</dbReference>
<dbReference type="PANTHER" id="PTHR34811:SF1">
    <property type="entry name" value="MATURASE K"/>
    <property type="match status" value="1"/>
</dbReference>
<dbReference type="Pfam" id="PF01348">
    <property type="entry name" value="Intron_maturas2"/>
    <property type="match status" value="1"/>
</dbReference>
<dbReference type="Pfam" id="PF01824">
    <property type="entry name" value="MatK_N"/>
    <property type="match status" value="1"/>
</dbReference>
<name>MATK_LEMMN</name>
<evidence type="ECO:0000255" key="1">
    <source>
        <dbReference type="HAMAP-Rule" id="MF_01390"/>
    </source>
</evidence>
<sequence length="512" mass="60468">MEDFKGYLQKGGFKQQHLLYPLLFQEYIYALAHDQGLNVNASTFNEPPEISGYDKKYSSLLVKRLINRLYQQNTFIHSVNNSKDNRFVGHNKNFYYQMISEAFAIVVEIPFSRRLVSSLKEKKEIPKYQNLRSIHSLFSFLEDKFSHLNYVSDILVPYPVHLEILVQILQCWIQDVPTLHLLRLLFQDYHNGNNRITPNKSTYGFSKDNPRLYRFLYNSYVVEYEAIFVFLRKSSSYLRSTSFGPLLERTHFYRKMKHIGVTCCNDFQKTLWLFKDALMHYVRYQGKSIMASKGNHLLMKKWKSYFVNLWQCHFHFWSQPSRIHINQFPHFSFYFLGYLSSVPINPSSAKSQMLENSFLIDTVTPKFETMISIIPMIGSLAKAKFCNLSGNPLSKPVWAELSDSDIIDRFGRIYRNLSHYYSGSSKKQTLYRIKYILRLSCARTLARKHKSTVRAFLQRLGSEFFEEFFIEEDKILSLILPTTSYSLQQLSRESVWFLDIIRINDLVNHLDL</sequence>
<keyword id="KW-0150">Chloroplast</keyword>
<keyword id="KW-0507">mRNA processing</keyword>
<keyword id="KW-0934">Plastid</keyword>
<keyword id="KW-0694">RNA-binding</keyword>
<keyword id="KW-0819">tRNA processing</keyword>
<comment type="function">
    <text evidence="1">Usually encoded in the trnK tRNA gene intron. Probably assists in splicing its own and other chloroplast group II introns.</text>
</comment>
<comment type="subcellular location">
    <subcellularLocation>
        <location>Plastid</location>
        <location>Chloroplast</location>
    </subcellularLocation>
</comment>
<comment type="similarity">
    <text evidence="1">Belongs to the intron maturase 2 family. MatK subfamily.</text>
</comment>
<geneLocation type="chloroplast"/>
<proteinExistence type="inferred from homology"/>
<feature type="chain" id="PRO_0000143467" description="Maturase K">
    <location>
        <begin position="1"/>
        <end position="512"/>
    </location>
</feature>
<reference key="1">
    <citation type="journal article" date="2002" name="Syst. Bot.">
        <title>Phylogeny and systematics of Lemnaceae, the duckweed family.</title>
        <authorList>
            <person name="Les D.H."/>
            <person name="Crawford D.J."/>
            <person name="Landolt E."/>
            <person name="Gabel J.D."/>
            <person name="Kimball R.T."/>
        </authorList>
        <dbReference type="AGRICOLA" id="IND23289763"/>
    </citation>
    <scope>NUCLEOTIDE SEQUENCE [GENOMIC DNA]</scope>
</reference>
<accession>Q8WHM4</accession>
<gene>
    <name evidence="1" type="primary">matK</name>
</gene>
<organism>
    <name type="scientific">Lemna minuta</name>
    <name type="common">Least duckweed</name>
    <dbReference type="NCBI Taxonomy" id="161101"/>
    <lineage>
        <taxon>Eukaryota</taxon>
        <taxon>Viridiplantae</taxon>
        <taxon>Streptophyta</taxon>
        <taxon>Embryophyta</taxon>
        <taxon>Tracheophyta</taxon>
        <taxon>Spermatophyta</taxon>
        <taxon>Magnoliopsida</taxon>
        <taxon>Liliopsida</taxon>
        <taxon>Araceae</taxon>
        <taxon>Lemnoideae</taxon>
        <taxon>Lemna</taxon>
    </lineage>
</organism>
<protein>
    <recommendedName>
        <fullName evidence="1">Maturase K</fullName>
    </recommendedName>
    <alternativeName>
        <fullName evidence="1">Intron maturase</fullName>
    </alternativeName>
</protein>